<dbReference type="EC" id="4.2.3.5" evidence="1"/>
<dbReference type="EMBL" id="AE000512">
    <property type="protein sequence ID" value="AAD35433.1"/>
    <property type="molecule type" value="Genomic_DNA"/>
</dbReference>
<dbReference type="PIR" id="A72389">
    <property type="entry name" value="A72389"/>
</dbReference>
<dbReference type="RefSeq" id="NP_228158.1">
    <property type="nucleotide sequence ID" value="NC_000853.1"/>
</dbReference>
<dbReference type="RefSeq" id="WP_004083133.1">
    <property type="nucleotide sequence ID" value="NC_000853.1"/>
</dbReference>
<dbReference type="SMR" id="Q9WYI2"/>
<dbReference type="FunCoup" id="Q9WYI2">
    <property type="interactions" value="354"/>
</dbReference>
<dbReference type="STRING" id="243274.TM_0347"/>
<dbReference type="PaxDb" id="243274-THEMA_02980"/>
<dbReference type="EnsemblBacteria" id="AAD35433">
    <property type="protein sequence ID" value="AAD35433"/>
    <property type="gene ID" value="TM_0347"/>
</dbReference>
<dbReference type="KEGG" id="tma:TM0347"/>
<dbReference type="KEGG" id="tmi:THEMA_02980"/>
<dbReference type="KEGG" id="tmm:Tmari_0345"/>
<dbReference type="KEGG" id="tmw:THMA_0355"/>
<dbReference type="eggNOG" id="COG0082">
    <property type="taxonomic scope" value="Bacteria"/>
</dbReference>
<dbReference type="InParanoid" id="Q9WYI2"/>
<dbReference type="OrthoDB" id="9771806at2"/>
<dbReference type="UniPathway" id="UPA00053">
    <property type="reaction ID" value="UER00090"/>
</dbReference>
<dbReference type="Proteomes" id="UP000008183">
    <property type="component" value="Chromosome"/>
</dbReference>
<dbReference type="GO" id="GO:0005829">
    <property type="term" value="C:cytosol"/>
    <property type="evidence" value="ECO:0000318"/>
    <property type="project" value="GO_Central"/>
</dbReference>
<dbReference type="GO" id="GO:0004107">
    <property type="term" value="F:chorismate synthase activity"/>
    <property type="evidence" value="ECO:0000318"/>
    <property type="project" value="GO_Central"/>
</dbReference>
<dbReference type="GO" id="GO:0010181">
    <property type="term" value="F:FMN binding"/>
    <property type="evidence" value="ECO:0000318"/>
    <property type="project" value="GO_Central"/>
</dbReference>
<dbReference type="GO" id="GO:0008652">
    <property type="term" value="P:amino acid biosynthetic process"/>
    <property type="evidence" value="ECO:0007669"/>
    <property type="project" value="UniProtKB-KW"/>
</dbReference>
<dbReference type="GO" id="GO:0009073">
    <property type="term" value="P:aromatic amino acid family biosynthetic process"/>
    <property type="evidence" value="ECO:0000318"/>
    <property type="project" value="GO_Central"/>
</dbReference>
<dbReference type="GO" id="GO:0009423">
    <property type="term" value="P:chorismate biosynthetic process"/>
    <property type="evidence" value="ECO:0000318"/>
    <property type="project" value="GO_Central"/>
</dbReference>
<dbReference type="Gene3D" id="3.60.150.10">
    <property type="entry name" value="Chorismate synthase AroC"/>
    <property type="match status" value="1"/>
</dbReference>
<dbReference type="HAMAP" id="MF_00300">
    <property type="entry name" value="Chorismate_synth"/>
    <property type="match status" value="1"/>
</dbReference>
<dbReference type="InterPro" id="IPR000453">
    <property type="entry name" value="Chorismate_synth"/>
</dbReference>
<dbReference type="InterPro" id="IPR035904">
    <property type="entry name" value="Chorismate_synth_AroC_sf"/>
</dbReference>
<dbReference type="InterPro" id="IPR020541">
    <property type="entry name" value="Chorismate_synthase_CS"/>
</dbReference>
<dbReference type="NCBIfam" id="TIGR00033">
    <property type="entry name" value="aroC"/>
    <property type="match status" value="1"/>
</dbReference>
<dbReference type="NCBIfam" id="NF003793">
    <property type="entry name" value="PRK05382.1"/>
    <property type="match status" value="1"/>
</dbReference>
<dbReference type="PANTHER" id="PTHR21085">
    <property type="entry name" value="CHORISMATE SYNTHASE"/>
    <property type="match status" value="1"/>
</dbReference>
<dbReference type="PANTHER" id="PTHR21085:SF0">
    <property type="entry name" value="CHORISMATE SYNTHASE"/>
    <property type="match status" value="1"/>
</dbReference>
<dbReference type="Pfam" id="PF01264">
    <property type="entry name" value="Chorismate_synt"/>
    <property type="match status" value="1"/>
</dbReference>
<dbReference type="PIRSF" id="PIRSF001456">
    <property type="entry name" value="Chorismate_synth"/>
    <property type="match status" value="1"/>
</dbReference>
<dbReference type="SUPFAM" id="SSF103263">
    <property type="entry name" value="Chorismate synthase, AroC"/>
    <property type="match status" value="1"/>
</dbReference>
<dbReference type="PROSITE" id="PS00787">
    <property type="entry name" value="CHORISMATE_SYNTHASE_1"/>
    <property type="match status" value="1"/>
</dbReference>
<dbReference type="PROSITE" id="PS00788">
    <property type="entry name" value="CHORISMATE_SYNTHASE_2"/>
    <property type="match status" value="1"/>
</dbReference>
<dbReference type="PROSITE" id="PS00789">
    <property type="entry name" value="CHORISMATE_SYNTHASE_3"/>
    <property type="match status" value="1"/>
</dbReference>
<feature type="chain" id="PRO_0000140668" description="Chorismate synthase">
    <location>
        <begin position="1"/>
        <end position="376"/>
    </location>
</feature>
<feature type="binding site" evidence="1">
    <location>
        <position position="39"/>
    </location>
    <ligand>
        <name>NADP(+)</name>
        <dbReference type="ChEBI" id="CHEBI:58349"/>
    </ligand>
</feature>
<feature type="binding site" evidence="1">
    <location>
        <position position="45"/>
    </location>
    <ligand>
        <name>NADP(+)</name>
        <dbReference type="ChEBI" id="CHEBI:58349"/>
    </ligand>
</feature>
<feature type="binding site" evidence="1">
    <location>
        <begin position="115"/>
        <end position="117"/>
    </location>
    <ligand>
        <name>FMN</name>
        <dbReference type="ChEBI" id="CHEBI:58210"/>
    </ligand>
</feature>
<feature type="binding site" evidence="1">
    <location>
        <position position="276"/>
    </location>
    <ligand>
        <name>FMN</name>
        <dbReference type="ChEBI" id="CHEBI:58210"/>
    </ligand>
</feature>
<feature type="binding site" evidence="1">
    <location>
        <begin position="291"/>
        <end position="295"/>
    </location>
    <ligand>
        <name>FMN</name>
        <dbReference type="ChEBI" id="CHEBI:58210"/>
    </ligand>
</feature>
<feature type="binding site" evidence="1">
    <location>
        <position position="317"/>
    </location>
    <ligand>
        <name>FMN</name>
        <dbReference type="ChEBI" id="CHEBI:58210"/>
    </ligand>
</feature>
<comment type="function">
    <text evidence="1">Catalyzes the anti-1,4-elimination of the C-3 phosphate and the C-6 proR hydrogen from 5-enolpyruvylshikimate-3-phosphate (EPSP) to yield chorismate, which is the branch point compound that serves as the starting substrate for the three terminal pathways of aromatic amino acid biosynthesis. This reaction introduces a second double bond into the aromatic ring system.</text>
</comment>
<comment type="catalytic activity">
    <reaction evidence="1">
        <text>5-O-(1-carboxyvinyl)-3-phosphoshikimate = chorismate + phosphate</text>
        <dbReference type="Rhea" id="RHEA:21020"/>
        <dbReference type="ChEBI" id="CHEBI:29748"/>
        <dbReference type="ChEBI" id="CHEBI:43474"/>
        <dbReference type="ChEBI" id="CHEBI:57701"/>
        <dbReference type="EC" id="4.2.3.5"/>
    </reaction>
</comment>
<comment type="cofactor">
    <cofactor evidence="1">
        <name>FMNH2</name>
        <dbReference type="ChEBI" id="CHEBI:57618"/>
    </cofactor>
    <text evidence="1">Reduced FMN (FMNH(2)).</text>
</comment>
<comment type="pathway">
    <text evidence="1">Metabolic intermediate biosynthesis; chorismate biosynthesis; chorismate from D-erythrose 4-phosphate and phosphoenolpyruvate: step 7/7.</text>
</comment>
<comment type="subunit">
    <text evidence="1">Homotetramer.</text>
</comment>
<comment type="similarity">
    <text evidence="1">Belongs to the chorismate synthase family.</text>
</comment>
<keyword id="KW-0028">Amino-acid biosynthesis</keyword>
<keyword id="KW-0057">Aromatic amino acid biosynthesis</keyword>
<keyword id="KW-0274">FAD</keyword>
<keyword id="KW-0285">Flavoprotein</keyword>
<keyword id="KW-0288">FMN</keyword>
<keyword id="KW-0456">Lyase</keyword>
<keyword id="KW-0521">NADP</keyword>
<keyword id="KW-1185">Reference proteome</keyword>
<sequence>MKLTIAGDSHGKYMVAILEGLPSGIRVDEELIRRDLFRRRNCYGRGKRMKMEEDAFEIVSGLWKGITTGAPVTILIPNRAGNPVKDVRSVPRPGHIDYAAWVKYKLPDLNIYVERSSARWTVALTAAGSLLKSLLKEFGIEVLGFVTRLGNVEARDIPGDFEELKRRRDESVVFCPDPEATKEMVAEIDRAKEEGNTLGGKVKVIARGVPAGIGSYSDLFKKLDSKIGSLFFAIPAVKGVVIGSEEMWYGFDYLDEFELEDGKIKRKTNNLGGIEGGITNGEDVWVNVSVKPIPTTGKPLKSVDLRTMEPAKTPYVRSDVTAVPPASVVCEAALAVVISDALLEHLGDGNIDDLKRRFENENLPRWNDGFWKEHYR</sequence>
<gene>
    <name evidence="1" type="primary">aroC</name>
    <name type="ordered locus">TM_0347</name>
</gene>
<organism>
    <name type="scientific">Thermotoga maritima (strain ATCC 43589 / DSM 3109 / JCM 10099 / NBRC 100826 / MSB8)</name>
    <dbReference type="NCBI Taxonomy" id="243274"/>
    <lineage>
        <taxon>Bacteria</taxon>
        <taxon>Thermotogati</taxon>
        <taxon>Thermotogota</taxon>
        <taxon>Thermotogae</taxon>
        <taxon>Thermotogales</taxon>
        <taxon>Thermotogaceae</taxon>
        <taxon>Thermotoga</taxon>
    </lineage>
</organism>
<protein>
    <recommendedName>
        <fullName evidence="1">Chorismate synthase</fullName>
        <shortName evidence="1">CS</shortName>
        <ecNumber evidence="1">4.2.3.5</ecNumber>
    </recommendedName>
    <alternativeName>
        <fullName evidence="1">5-enolpyruvylshikimate-3-phosphate phospholyase</fullName>
    </alternativeName>
</protein>
<accession>Q9WYI2</accession>
<reference key="1">
    <citation type="journal article" date="1999" name="Nature">
        <title>Evidence for lateral gene transfer between Archaea and Bacteria from genome sequence of Thermotoga maritima.</title>
        <authorList>
            <person name="Nelson K.E."/>
            <person name="Clayton R.A."/>
            <person name="Gill S.R."/>
            <person name="Gwinn M.L."/>
            <person name="Dodson R.J."/>
            <person name="Haft D.H."/>
            <person name="Hickey E.K."/>
            <person name="Peterson J.D."/>
            <person name="Nelson W.C."/>
            <person name="Ketchum K.A."/>
            <person name="McDonald L.A."/>
            <person name="Utterback T.R."/>
            <person name="Malek J.A."/>
            <person name="Linher K.D."/>
            <person name="Garrett M.M."/>
            <person name="Stewart A.M."/>
            <person name="Cotton M.D."/>
            <person name="Pratt M.S."/>
            <person name="Phillips C.A."/>
            <person name="Richardson D.L."/>
            <person name="Heidelberg J.F."/>
            <person name="Sutton G.G."/>
            <person name="Fleischmann R.D."/>
            <person name="Eisen J.A."/>
            <person name="White O."/>
            <person name="Salzberg S.L."/>
            <person name="Smith H.O."/>
            <person name="Venter J.C."/>
            <person name="Fraser C.M."/>
        </authorList>
    </citation>
    <scope>NUCLEOTIDE SEQUENCE [LARGE SCALE GENOMIC DNA]</scope>
    <source>
        <strain>ATCC 43589 / DSM 3109 / JCM 10099 / NBRC 100826 / MSB8</strain>
    </source>
</reference>
<name>AROC_THEMA</name>
<proteinExistence type="inferred from homology"/>
<evidence type="ECO:0000255" key="1">
    <source>
        <dbReference type="HAMAP-Rule" id="MF_00300"/>
    </source>
</evidence>